<sequence length="190" mass="21831">MPVVSNTELSMRRQEILEGARRCFAEHGYEGATVRRLEETVGKSRGAIFHHFSDKENLFLALAREDAARMAEVVAENGLVEVMRDMLAHPERHDWLATRLEITKMLRTDPSFRNRWIEHQRVLDDAVLERLQRNAHLGRMRDDVPIDVLHTYLETVLDGFISRLASGGDTDNLERVLDLVEESVRSSQPS</sequence>
<reference key="1">
    <citation type="journal article" date="2003" name="Nucleic Acids Res.">
        <title>The complete genome sequence and analysis of Corynebacterium diphtheriae NCTC13129.</title>
        <authorList>
            <person name="Cerdeno-Tarraga A.-M."/>
            <person name="Efstratiou A."/>
            <person name="Dover L.G."/>
            <person name="Holden M.T.G."/>
            <person name="Pallen M.J."/>
            <person name="Bentley S.D."/>
            <person name="Besra G.S."/>
            <person name="Churcher C.M."/>
            <person name="James K.D."/>
            <person name="De Zoysa A."/>
            <person name="Chillingworth T."/>
            <person name="Cronin A."/>
            <person name="Dowd L."/>
            <person name="Feltwell T."/>
            <person name="Hamlin N."/>
            <person name="Holroyd S."/>
            <person name="Jagels K."/>
            <person name="Moule S."/>
            <person name="Quail M.A."/>
            <person name="Rabbinowitsch E."/>
            <person name="Rutherford K.M."/>
            <person name="Thomson N.R."/>
            <person name="Unwin L."/>
            <person name="Whitehead S."/>
            <person name="Barrell B.G."/>
            <person name="Parkhill J."/>
        </authorList>
    </citation>
    <scope>NUCLEOTIDE SEQUENCE [LARGE SCALE GENOMIC DNA]</scope>
    <source>
        <strain>ATCC 700971 / NCTC 13129 / Biotype gravis</strain>
    </source>
</reference>
<feature type="chain" id="PRO_0000070569" description="HTH-type transcriptional repressor AcnR">
    <location>
        <begin position="1"/>
        <end position="190"/>
    </location>
</feature>
<feature type="domain" description="HTH tetR-type" evidence="2">
    <location>
        <begin position="10"/>
        <end position="70"/>
    </location>
</feature>
<feature type="DNA-binding region" description="H-T-H motif" evidence="2">
    <location>
        <begin position="33"/>
        <end position="52"/>
    </location>
</feature>
<feature type="binding site" evidence="1">
    <location>
        <begin position="79"/>
        <end position="80"/>
    </location>
    <ligand>
        <name>citrate</name>
        <dbReference type="ChEBI" id="CHEBI:16947"/>
    </ligand>
</feature>
<feature type="binding site" evidence="1">
    <location>
        <position position="130"/>
    </location>
    <ligand>
        <name>citrate</name>
        <dbReference type="ChEBI" id="CHEBI:16947"/>
    </ligand>
</feature>
<feature type="binding site" evidence="1">
    <location>
        <position position="134"/>
    </location>
    <ligand>
        <name>citrate</name>
        <dbReference type="ChEBI" id="CHEBI:16947"/>
    </ligand>
</feature>
<feature type="binding site" evidence="1">
    <location>
        <position position="181"/>
    </location>
    <ligand>
        <name>Mg(2+)</name>
        <dbReference type="ChEBI" id="CHEBI:18420"/>
    </ligand>
</feature>
<feature type="binding site" evidence="1">
    <location>
        <position position="185"/>
    </location>
    <ligand>
        <name>citrate</name>
        <dbReference type="ChEBI" id="CHEBI:16947"/>
    </ligand>
</feature>
<proteinExistence type="inferred from homology"/>
<name>ACNR_CORDI</name>
<accession>Q6NH62</accession>
<gene>
    <name evidence="1" type="primary">acnR</name>
    <name type="ordered locus">DIP1284</name>
</gene>
<evidence type="ECO:0000250" key="1">
    <source>
        <dbReference type="UniProtKB" id="Q8NQ97"/>
    </source>
</evidence>
<evidence type="ECO:0000255" key="2">
    <source>
        <dbReference type="PROSITE-ProRule" id="PRU00335"/>
    </source>
</evidence>
<comment type="function">
    <text evidence="1">AcnR negatively controls the expression of the aconitase gene acn.</text>
</comment>
<comment type="subunit">
    <text evidence="1">Homodimer.</text>
</comment>
<protein>
    <recommendedName>
        <fullName evidence="1">HTH-type transcriptional repressor AcnR</fullName>
    </recommendedName>
</protein>
<organism>
    <name type="scientific">Corynebacterium diphtheriae (strain ATCC 700971 / NCTC 13129 / Biotype gravis)</name>
    <dbReference type="NCBI Taxonomy" id="257309"/>
    <lineage>
        <taxon>Bacteria</taxon>
        <taxon>Bacillati</taxon>
        <taxon>Actinomycetota</taxon>
        <taxon>Actinomycetes</taxon>
        <taxon>Mycobacteriales</taxon>
        <taxon>Corynebacteriaceae</taxon>
        <taxon>Corynebacterium</taxon>
    </lineage>
</organism>
<keyword id="KW-0238">DNA-binding</keyword>
<keyword id="KW-0460">Magnesium</keyword>
<keyword id="KW-0479">Metal-binding</keyword>
<keyword id="KW-1185">Reference proteome</keyword>
<keyword id="KW-0678">Repressor</keyword>
<keyword id="KW-0804">Transcription</keyword>
<keyword id="KW-0805">Transcription regulation</keyword>
<dbReference type="EMBL" id="BX248357">
    <property type="protein sequence ID" value="CAE49811.1"/>
    <property type="molecule type" value="Genomic_DNA"/>
</dbReference>
<dbReference type="RefSeq" id="WP_010934950.1">
    <property type="nucleotide sequence ID" value="NC_002935.2"/>
</dbReference>
<dbReference type="SMR" id="Q6NH62"/>
<dbReference type="STRING" id="257309.DIP1284"/>
<dbReference type="KEGG" id="cdi:DIP1284"/>
<dbReference type="HOGENOM" id="CLU_069356_15_12_11"/>
<dbReference type="Proteomes" id="UP000002198">
    <property type="component" value="Chromosome"/>
</dbReference>
<dbReference type="GO" id="GO:0003677">
    <property type="term" value="F:DNA binding"/>
    <property type="evidence" value="ECO:0000250"/>
    <property type="project" value="UniProtKB"/>
</dbReference>
<dbReference type="GO" id="GO:0003700">
    <property type="term" value="F:DNA-binding transcription factor activity"/>
    <property type="evidence" value="ECO:0007669"/>
    <property type="project" value="TreeGrafter"/>
</dbReference>
<dbReference type="GO" id="GO:0000287">
    <property type="term" value="F:magnesium ion binding"/>
    <property type="evidence" value="ECO:0000250"/>
    <property type="project" value="UniProtKB"/>
</dbReference>
<dbReference type="GO" id="GO:0000976">
    <property type="term" value="F:transcription cis-regulatory region binding"/>
    <property type="evidence" value="ECO:0007669"/>
    <property type="project" value="TreeGrafter"/>
</dbReference>
<dbReference type="GO" id="GO:0006355">
    <property type="term" value="P:regulation of DNA-templated transcription"/>
    <property type="evidence" value="ECO:0000250"/>
    <property type="project" value="UniProtKB"/>
</dbReference>
<dbReference type="FunFam" id="1.10.357.10:FF:000013">
    <property type="entry name" value="TetR family transcriptional regulator"/>
    <property type="match status" value="1"/>
</dbReference>
<dbReference type="Gene3D" id="1.10.357.10">
    <property type="entry name" value="Tetracycline Repressor, domain 2"/>
    <property type="match status" value="1"/>
</dbReference>
<dbReference type="InterPro" id="IPR009057">
    <property type="entry name" value="Homeodomain-like_sf"/>
</dbReference>
<dbReference type="InterPro" id="IPR050109">
    <property type="entry name" value="HTH-type_TetR-like_transc_reg"/>
</dbReference>
<dbReference type="InterPro" id="IPR001647">
    <property type="entry name" value="HTH_TetR"/>
</dbReference>
<dbReference type="InterPro" id="IPR036271">
    <property type="entry name" value="Tet_transcr_reg_TetR-rel_C_sf"/>
</dbReference>
<dbReference type="PANTHER" id="PTHR30055">
    <property type="entry name" value="HTH-TYPE TRANSCRIPTIONAL REGULATOR RUTR"/>
    <property type="match status" value="1"/>
</dbReference>
<dbReference type="PANTHER" id="PTHR30055:SF229">
    <property type="entry name" value="HTH-TYPE TRANSCRIPTIONAL REPRESSOR RV1474C"/>
    <property type="match status" value="1"/>
</dbReference>
<dbReference type="Pfam" id="PF00440">
    <property type="entry name" value="TetR_N"/>
    <property type="match status" value="1"/>
</dbReference>
<dbReference type="PRINTS" id="PR00455">
    <property type="entry name" value="HTHTETR"/>
</dbReference>
<dbReference type="SUPFAM" id="SSF46689">
    <property type="entry name" value="Homeodomain-like"/>
    <property type="match status" value="1"/>
</dbReference>
<dbReference type="SUPFAM" id="SSF48498">
    <property type="entry name" value="Tetracyclin repressor-like, C-terminal domain"/>
    <property type="match status" value="1"/>
</dbReference>
<dbReference type="PROSITE" id="PS50977">
    <property type="entry name" value="HTH_TETR_2"/>
    <property type="match status" value="1"/>
</dbReference>